<name>DPEP1_HUMAN</name>
<keyword id="KW-0002">3D-structure</keyword>
<keyword id="KW-1003">Cell membrane</keyword>
<keyword id="KW-0966">Cell projection</keyword>
<keyword id="KW-0224">Dipeptidase</keyword>
<keyword id="KW-0903">Direct protein sequencing</keyword>
<keyword id="KW-1015">Disulfide bond</keyword>
<keyword id="KW-0325">Glycoprotein</keyword>
<keyword id="KW-0336">GPI-anchor</keyword>
<keyword id="KW-0378">Hydrolase</keyword>
<keyword id="KW-0443">Lipid metabolism</keyword>
<keyword id="KW-0449">Lipoprotein</keyword>
<keyword id="KW-0472">Membrane</keyword>
<keyword id="KW-0479">Metal-binding</keyword>
<keyword id="KW-0482">Metalloprotease</keyword>
<keyword id="KW-0645">Protease</keyword>
<keyword id="KW-1267">Proteomics identification</keyword>
<keyword id="KW-1185">Reference proteome</keyword>
<keyword id="KW-0732">Signal</keyword>
<keyword id="KW-0862">Zinc</keyword>
<comment type="function">
    <text evidence="1 11 14 15 16">Hydrolyzes a wide range of dipeptides including the conversion of leukotriene D4 to leukotriene E4 (PubMed:2303490, PubMed:31442408, PubMed:32325220, PubMed:6334084). Hydrolyzes cystinyl-bis-glycine (cys-bis-gly) formed during glutathione degradation (PubMed:32325220). Also possesses beta lactamase activity and can hydrolyze the beta-lactam antibiotic imipenem (PubMed:32325220, PubMed:6334084).</text>
</comment>
<comment type="function">
    <text evidence="1">Independently of its dipeptidase activity, acts as an adhesion receptor for neutrophil recruitment from bloodstream into inflamed lungs and liver.</text>
</comment>
<comment type="catalytic activity">
    <reaction evidence="4 11 15">
        <text>an L-aminoacyl-L-amino acid + H2O = 2 an L-alpha-amino acid</text>
        <dbReference type="Rhea" id="RHEA:48940"/>
        <dbReference type="ChEBI" id="CHEBI:15377"/>
        <dbReference type="ChEBI" id="CHEBI:59869"/>
        <dbReference type="ChEBI" id="CHEBI:77460"/>
        <dbReference type="EC" id="3.4.13.19"/>
    </reaction>
</comment>
<comment type="catalytic activity">
    <reaction evidence="11 15">
        <text>leukotriene D4 + H2O = leukotriene E4 + glycine</text>
        <dbReference type="Rhea" id="RHEA:48616"/>
        <dbReference type="ChEBI" id="CHEBI:15377"/>
        <dbReference type="ChEBI" id="CHEBI:57305"/>
        <dbReference type="ChEBI" id="CHEBI:57462"/>
        <dbReference type="ChEBI" id="CHEBI:63166"/>
    </reaction>
</comment>
<comment type="catalytic activity">
    <reaction evidence="15 16">
        <text>a beta-lactam + H2O = a substituted beta-amino acid</text>
        <dbReference type="Rhea" id="RHEA:20401"/>
        <dbReference type="ChEBI" id="CHEBI:15377"/>
        <dbReference type="ChEBI" id="CHEBI:35627"/>
        <dbReference type="ChEBI" id="CHEBI:140347"/>
        <dbReference type="EC" id="3.5.2.6"/>
    </reaction>
</comment>
<comment type="catalytic activity">
    <reaction evidence="15">
        <text>L-cystine-bis-glycine + 2 H2O = L-cystine + 2 glycine</text>
        <dbReference type="Rhea" id="RHEA:60520"/>
        <dbReference type="ChEBI" id="CHEBI:15377"/>
        <dbReference type="ChEBI" id="CHEBI:35491"/>
        <dbReference type="ChEBI" id="CHEBI:57305"/>
        <dbReference type="ChEBI" id="CHEBI:143812"/>
    </reaction>
</comment>
<comment type="catalytic activity">
    <reaction evidence="11 14 16">
        <text>glycyldehydrophenylalanine + H2O = 2,3-didehydrophenylalanine + glycine</text>
        <dbReference type="Rhea" id="RHEA:62704"/>
        <dbReference type="ChEBI" id="CHEBI:15377"/>
        <dbReference type="ChEBI" id="CHEBI:57305"/>
        <dbReference type="ChEBI" id="CHEBI:145925"/>
        <dbReference type="ChEBI" id="CHEBI:145926"/>
    </reaction>
</comment>
<comment type="cofactor">
    <cofactor evidence="4 5">
        <name>Zn(2+)</name>
        <dbReference type="ChEBI" id="CHEBI:29105"/>
    </cofactor>
    <text evidence="5">Binds 2 Zn(2+) ion per monomer.</text>
</comment>
<comment type="activity regulation">
    <text evidence="14 16">Inhibited by L-penicillamine (PubMed:31442408). Beta-lactamase activity is inhibited by cilastatin (PubMed:31442408, PubMed:6334084).</text>
</comment>
<comment type="biophysicochemical properties">
    <kinetics>
        <KM evidence="16">10.9 uM for imipenem</KM>
        <Vmax evidence="16">44.5 umol/min/mg enzyme with imipenem as substrate</Vmax>
    </kinetics>
</comment>
<comment type="subunit">
    <text evidence="4 5">Homodimer; disulfide-linked.</text>
</comment>
<comment type="interaction">
    <interactant intactId="EBI-749514">
        <id>P16444</id>
    </interactant>
    <interactant intactId="EBI-3904404">
        <id>P16219</id>
        <label>ACADS</label>
    </interactant>
    <organismsDiffer>false</organismsDiffer>
    <experiments>2</experiments>
</comment>
<comment type="interaction">
    <interactant intactId="EBI-749514">
        <id>P16444</id>
    </interactant>
    <interactant intactId="EBI-743771">
        <id>Q92624</id>
        <label>APPBP2</label>
    </interactant>
    <organismsDiffer>false</organismsDiffer>
    <experiments>3</experiments>
</comment>
<comment type="interaction">
    <interactant intactId="EBI-749514">
        <id>P16444</id>
    </interactant>
    <interactant intactId="EBI-744150">
        <id>Q96EK5</id>
        <label>KIFBP</label>
    </interactant>
    <organismsDiffer>false</organismsDiffer>
    <experiments>2</experiments>
</comment>
<comment type="subcellular location">
    <subcellularLocation>
        <location evidence="13">Apical cell membrane</location>
        <topology evidence="10">Lipid-anchor</topology>
        <topology evidence="10">GPI-anchor</topology>
    </subcellularLocation>
    <subcellularLocation>
        <location evidence="10">Cell projection</location>
        <location evidence="10">Microvillus membrane</location>
        <topology evidence="10">Lipid-anchor</topology>
        <topology evidence="10">GPI-anchor</topology>
    </subcellularLocation>
    <text evidence="2">Brush border membrane.</text>
</comment>
<comment type="tissue specificity">
    <text evidence="14 18">Expressed in lung and kidneys.</text>
</comment>
<comment type="induction">
    <text evidence="13">Up-regulated in n colorectal cancers.</text>
</comment>
<comment type="similarity">
    <text evidence="4">Belongs to the metallo-dependent hydrolases superfamily. Peptidase M19 family.</text>
</comment>
<evidence type="ECO:0000250" key="1">
    <source>
        <dbReference type="UniProtKB" id="P31428"/>
    </source>
</evidence>
<evidence type="ECO:0000250" key="2">
    <source>
        <dbReference type="UniProtKB" id="P31429"/>
    </source>
</evidence>
<evidence type="ECO:0000255" key="3"/>
<evidence type="ECO:0000255" key="4">
    <source>
        <dbReference type="PROSITE-ProRule" id="PRU10073"/>
    </source>
</evidence>
<evidence type="ECO:0000269" key="5">
    <source>
    </source>
</evidence>
<evidence type="ECO:0000269" key="6">
    <source>
    </source>
</evidence>
<evidence type="ECO:0000269" key="7">
    <source>
    </source>
</evidence>
<evidence type="ECO:0000269" key="8">
    <source>
    </source>
</evidence>
<evidence type="ECO:0000269" key="9">
    <source>
    </source>
</evidence>
<evidence type="ECO:0000269" key="10">
    <source>
    </source>
</evidence>
<evidence type="ECO:0000269" key="11">
    <source>
    </source>
</evidence>
<evidence type="ECO:0000269" key="12">
    <source>
    </source>
</evidence>
<evidence type="ECO:0000269" key="13">
    <source>
    </source>
</evidence>
<evidence type="ECO:0000269" key="14">
    <source>
    </source>
</evidence>
<evidence type="ECO:0000269" key="15">
    <source>
    </source>
</evidence>
<evidence type="ECO:0000269" key="16">
    <source>
    </source>
</evidence>
<evidence type="ECO:0000269" key="17">
    <source>
    </source>
</evidence>
<evidence type="ECO:0000269" key="18">
    <source>
    </source>
</evidence>
<evidence type="ECO:0000303" key="19">
    <source>
    </source>
</evidence>
<evidence type="ECO:0000303" key="20">
    <source>
    </source>
</evidence>
<evidence type="ECO:0000305" key="21"/>
<evidence type="ECO:0007829" key="22">
    <source>
        <dbReference type="PDB" id="1ITQ"/>
    </source>
</evidence>
<evidence type="ECO:0007829" key="23">
    <source>
        <dbReference type="PDB" id="1ITU"/>
    </source>
</evidence>
<gene>
    <name type="primary">DPEP1</name>
    <name evidence="19" type="synonym">MDP</name>
    <name type="synonym">RDP</name>
</gene>
<dbReference type="EC" id="3.4.13.19" evidence="11 15 16"/>
<dbReference type="EC" id="3.5.2.6" evidence="16"/>
<dbReference type="EMBL" id="D13137">
    <property type="protein sequence ID" value="BAA02430.1"/>
    <property type="molecule type" value="Genomic_DNA"/>
</dbReference>
<dbReference type="EMBL" id="J05257">
    <property type="protein sequence ID" value="AAB59410.1"/>
    <property type="molecule type" value="mRNA"/>
</dbReference>
<dbReference type="EMBL" id="D13138">
    <property type="protein sequence ID" value="BAA02431.1"/>
    <property type="molecule type" value="mRNA"/>
</dbReference>
<dbReference type="EMBL" id="S70330">
    <property type="protein sequence ID" value="AAC60630.2"/>
    <property type="molecule type" value="Genomic_DNA"/>
</dbReference>
<dbReference type="EMBL" id="S70329">
    <property type="protein sequence ID" value="AAC60630.2"/>
    <property type="status" value="JOINED"/>
    <property type="molecule type" value="Genomic_DNA"/>
</dbReference>
<dbReference type="EMBL" id="CH471184">
    <property type="protein sequence ID" value="EAW66719.1"/>
    <property type="molecule type" value="Genomic_DNA"/>
</dbReference>
<dbReference type="EMBL" id="CH471184">
    <property type="protein sequence ID" value="EAW66720.1"/>
    <property type="molecule type" value="Genomic_DNA"/>
</dbReference>
<dbReference type="EMBL" id="BC017023">
    <property type="protein sequence ID" value="AAH17023.1"/>
    <property type="molecule type" value="mRNA"/>
</dbReference>
<dbReference type="EMBL" id="BT006664">
    <property type="protein sequence ID" value="AAP35310.1"/>
    <property type="molecule type" value="mRNA"/>
</dbReference>
<dbReference type="CCDS" id="CCDS10982.1"/>
<dbReference type="PIR" id="S29848">
    <property type="entry name" value="S29848"/>
</dbReference>
<dbReference type="RefSeq" id="NP_001121613.1">
    <property type="nucleotide sequence ID" value="NM_001128141.3"/>
</dbReference>
<dbReference type="RefSeq" id="NP_001376395.1">
    <property type="nucleotide sequence ID" value="NM_001389466.1"/>
</dbReference>
<dbReference type="RefSeq" id="NP_001376396.1">
    <property type="nucleotide sequence ID" value="NM_001389467.1"/>
</dbReference>
<dbReference type="RefSeq" id="NP_001376397.1">
    <property type="nucleotide sequence ID" value="NM_001389468.1"/>
</dbReference>
<dbReference type="RefSeq" id="NP_001376398.1">
    <property type="nucleotide sequence ID" value="NM_001389469.1"/>
</dbReference>
<dbReference type="RefSeq" id="NP_004404.1">
    <property type="nucleotide sequence ID" value="NM_004413.4"/>
</dbReference>
<dbReference type="RefSeq" id="XP_005256342.1">
    <property type="nucleotide sequence ID" value="XM_005256285.4"/>
</dbReference>
<dbReference type="RefSeq" id="XP_005256343.1">
    <property type="nucleotide sequence ID" value="XM_005256286.3"/>
</dbReference>
<dbReference type="RefSeq" id="XP_011521227.1">
    <property type="nucleotide sequence ID" value="XM_011522925.2"/>
</dbReference>
<dbReference type="RefSeq" id="XP_047289646.1">
    <property type="nucleotide sequence ID" value="XM_047433690.1"/>
</dbReference>
<dbReference type="RefSeq" id="XP_047289649.1">
    <property type="nucleotide sequence ID" value="XM_047433693.1"/>
</dbReference>
<dbReference type="RefSeq" id="XP_054235704.1">
    <property type="nucleotide sequence ID" value="XM_054379729.1"/>
</dbReference>
<dbReference type="RefSeq" id="XP_054235705.1">
    <property type="nucleotide sequence ID" value="XM_054379730.1"/>
</dbReference>
<dbReference type="PDB" id="1ITQ">
    <property type="method" value="X-ray"/>
    <property type="resolution" value="2.30 A"/>
    <property type="chains" value="A/B=17-385"/>
</dbReference>
<dbReference type="PDB" id="1ITU">
    <property type="method" value="X-ray"/>
    <property type="resolution" value="2.00 A"/>
    <property type="chains" value="A/B=17-385"/>
</dbReference>
<dbReference type="PDBsum" id="1ITQ"/>
<dbReference type="PDBsum" id="1ITU"/>
<dbReference type="SMR" id="P16444"/>
<dbReference type="BioGRID" id="108134">
    <property type="interactions" value="74"/>
</dbReference>
<dbReference type="CORUM" id="P16444"/>
<dbReference type="FunCoup" id="P16444">
    <property type="interactions" value="11"/>
</dbReference>
<dbReference type="IntAct" id="P16444">
    <property type="interactions" value="63"/>
</dbReference>
<dbReference type="STRING" id="9606.ENSP00000376807"/>
<dbReference type="BindingDB" id="P16444"/>
<dbReference type="ChEMBL" id="CHEMBL1989"/>
<dbReference type="DrugBank" id="DB01597">
    <property type="generic name" value="Cilastatin"/>
</dbReference>
<dbReference type="DrugBank" id="DB06211">
    <property type="generic name" value="Doripenem"/>
</dbReference>
<dbReference type="DrugBank" id="DB00303">
    <property type="generic name" value="Ertapenem"/>
</dbReference>
<dbReference type="DrugBank" id="DB01598">
    <property type="generic name" value="Imipenem"/>
</dbReference>
<dbReference type="DrugBank" id="DB00760">
    <property type="generic name" value="Meropenem"/>
</dbReference>
<dbReference type="DrugBank" id="DB03424">
    <property type="generic name" value="Ubenimex"/>
</dbReference>
<dbReference type="DrugCentral" id="P16444"/>
<dbReference type="MEROPS" id="M19.001"/>
<dbReference type="GlyConnect" id="1174">
    <property type="glycosylation" value="2 N-Linked glycans (1 site)"/>
</dbReference>
<dbReference type="GlyCosmos" id="P16444">
    <property type="glycosylation" value="5 sites, 3 glycans"/>
</dbReference>
<dbReference type="GlyGen" id="P16444">
    <property type="glycosylation" value="6 sites, 139 N-linked glycans (4 sites), 2 O-linked glycans (2 sites)"/>
</dbReference>
<dbReference type="iPTMnet" id="P16444"/>
<dbReference type="PhosphoSitePlus" id="P16444"/>
<dbReference type="SwissPalm" id="P16444"/>
<dbReference type="BioMuta" id="DPEP1"/>
<dbReference type="DMDM" id="92090943"/>
<dbReference type="jPOST" id="P16444"/>
<dbReference type="MassIVE" id="P16444"/>
<dbReference type="PaxDb" id="9606-ENSP00000376807"/>
<dbReference type="PeptideAtlas" id="P16444"/>
<dbReference type="ProteomicsDB" id="53362"/>
<dbReference type="Antibodypedia" id="1973">
    <property type="antibodies" value="221 antibodies from 28 providers"/>
</dbReference>
<dbReference type="DNASU" id="1800"/>
<dbReference type="Ensembl" id="ENST00000261615.5">
    <property type="protein sequence ID" value="ENSP00000261615.4"/>
    <property type="gene ID" value="ENSG00000015413.10"/>
</dbReference>
<dbReference type="Ensembl" id="ENST00000393092.7">
    <property type="protein sequence ID" value="ENSP00000376807.3"/>
    <property type="gene ID" value="ENSG00000015413.10"/>
</dbReference>
<dbReference type="Ensembl" id="ENST00000421184.5">
    <property type="protein sequence ID" value="ENSP00000397313.1"/>
    <property type="gene ID" value="ENSG00000015413.10"/>
</dbReference>
<dbReference type="Ensembl" id="ENST00000690203.1">
    <property type="protein sequence ID" value="ENSP00000508584.1"/>
    <property type="gene ID" value="ENSG00000015413.10"/>
</dbReference>
<dbReference type="GeneID" id="1800"/>
<dbReference type="KEGG" id="hsa:1800"/>
<dbReference type="MANE-Select" id="ENST00000690203.1">
    <property type="protein sequence ID" value="ENSP00000508584.1"/>
    <property type="RefSeq nucleotide sequence ID" value="NM_001389466.1"/>
    <property type="RefSeq protein sequence ID" value="NP_001376395.1"/>
</dbReference>
<dbReference type="UCSC" id="uc002fnr.5">
    <property type="organism name" value="human"/>
</dbReference>
<dbReference type="AGR" id="HGNC:3002"/>
<dbReference type="CTD" id="1800"/>
<dbReference type="DisGeNET" id="1800"/>
<dbReference type="GeneCards" id="DPEP1"/>
<dbReference type="HGNC" id="HGNC:3002">
    <property type="gene designation" value="DPEP1"/>
</dbReference>
<dbReference type="HPA" id="ENSG00000015413">
    <property type="expression patterns" value="Group enriched (intestine, kidney, pancreas)"/>
</dbReference>
<dbReference type="MIM" id="179780">
    <property type="type" value="gene"/>
</dbReference>
<dbReference type="neXtProt" id="NX_P16444"/>
<dbReference type="OpenTargets" id="ENSG00000015413"/>
<dbReference type="PharmGKB" id="PA144"/>
<dbReference type="VEuPathDB" id="HostDB:ENSG00000015413"/>
<dbReference type="eggNOG" id="KOG4127">
    <property type="taxonomic scope" value="Eukaryota"/>
</dbReference>
<dbReference type="GeneTree" id="ENSGT00940000159615"/>
<dbReference type="HOGENOM" id="CLU_031404_4_2_1"/>
<dbReference type="InParanoid" id="P16444"/>
<dbReference type="OMA" id="CDHPRNI"/>
<dbReference type="OrthoDB" id="445695at2759"/>
<dbReference type="PAN-GO" id="P16444">
    <property type="GO annotations" value="1 GO annotation based on evolutionary models"/>
</dbReference>
<dbReference type="PhylomeDB" id="P16444"/>
<dbReference type="TreeFam" id="TF324523"/>
<dbReference type="BioCyc" id="MetaCyc:HS00367-MONOMER"/>
<dbReference type="BRENDA" id="3.4.13.19">
    <property type="organism ID" value="2681"/>
</dbReference>
<dbReference type="PathwayCommons" id="P16444"/>
<dbReference type="Reactome" id="R-HSA-2142691">
    <property type="pathway name" value="Synthesis of Leukotrienes (LT) and Eoxins (EX)"/>
</dbReference>
<dbReference type="Reactome" id="R-HSA-5423646">
    <property type="pathway name" value="Aflatoxin activation and detoxification"/>
</dbReference>
<dbReference type="Reactome" id="R-HSA-9664535">
    <property type="pathway name" value="LTC4-CYSLTR mediated IL4 production"/>
</dbReference>
<dbReference type="SABIO-RK" id="P16444"/>
<dbReference type="SignaLink" id="P16444"/>
<dbReference type="BioGRID-ORCS" id="1800">
    <property type="hits" value="11 hits in 1162 CRISPR screens"/>
</dbReference>
<dbReference type="ChiTaRS" id="DPEP1">
    <property type="organism name" value="human"/>
</dbReference>
<dbReference type="EvolutionaryTrace" id="P16444"/>
<dbReference type="GeneWiki" id="Dipeptidase_1"/>
<dbReference type="GenomeRNAi" id="1800"/>
<dbReference type="Pharos" id="P16444">
    <property type="development level" value="Tclin"/>
</dbReference>
<dbReference type="PRO" id="PR:P16444"/>
<dbReference type="Proteomes" id="UP000005640">
    <property type="component" value="Chromosome 16"/>
</dbReference>
<dbReference type="RNAct" id="P16444">
    <property type="molecule type" value="protein"/>
</dbReference>
<dbReference type="Bgee" id="ENSG00000015413">
    <property type="expression patterns" value="Expressed in ileal mucosa and 125 other cell types or tissues"/>
</dbReference>
<dbReference type="ExpressionAtlas" id="P16444">
    <property type="expression patterns" value="baseline and differential"/>
</dbReference>
<dbReference type="GO" id="GO:0045177">
    <property type="term" value="C:apical part of cell"/>
    <property type="evidence" value="ECO:0000314"/>
    <property type="project" value="UniProtKB"/>
</dbReference>
<dbReference type="GO" id="GO:0016324">
    <property type="term" value="C:apical plasma membrane"/>
    <property type="evidence" value="ECO:0007669"/>
    <property type="project" value="UniProtKB-SubCell"/>
</dbReference>
<dbReference type="GO" id="GO:0030054">
    <property type="term" value="C:cell junction"/>
    <property type="evidence" value="ECO:0000314"/>
    <property type="project" value="HPA"/>
</dbReference>
<dbReference type="GO" id="GO:0070062">
    <property type="term" value="C:extracellular exosome"/>
    <property type="evidence" value="ECO:0007005"/>
    <property type="project" value="UniProtKB"/>
</dbReference>
<dbReference type="GO" id="GO:0005615">
    <property type="term" value="C:extracellular space"/>
    <property type="evidence" value="ECO:0000250"/>
    <property type="project" value="UniProtKB"/>
</dbReference>
<dbReference type="GO" id="GO:0031528">
    <property type="term" value="C:microvillus membrane"/>
    <property type="evidence" value="ECO:0007669"/>
    <property type="project" value="UniProtKB-SubCell"/>
</dbReference>
<dbReference type="GO" id="GO:0005654">
    <property type="term" value="C:nucleoplasm"/>
    <property type="evidence" value="ECO:0000314"/>
    <property type="project" value="HPA"/>
</dbReference>
<dbReference type="GO" id="GO:0005886">
    <property type="term" value="C:plasma membrane"/>
    <property type="evidence" value="ECO:0000314"/>
    <property type="project" value="UniProtKB"/>
</dbReference>
<dbReference type="GO" id="GO:0098552">
    <property type="term" value="C:side of membrane"/>
    <property type="evidence" value="ECO:0007669"/>
    <property type="project" value="UniProtKB-KW"/>
</dbReference>
<dbReference type="GO" id="GO:0008800">
    <property type="term" value="F:beta-lactamase activity"/>
    <property type="evidence" value="ECO:0000314"/>
    <property type="project" value="UniProtKB"/>
</dbReference>
<dbReference type="GO" id="GO:0016805">
    <property type="term" value="F:dipeptidase activity"/>
    <property type="evidence" value="ECO:0000314"/>
    <property type="project" value="UniProtKB"/>
</dbReference>
<dbReference type="GO" id="GO:0034235">
    <property type="term" value="F:GPI anchor binding"/>
    <property type="evidence" value="ECO:0000250"/>
    <property type="project" value="UniProtKB"/>
</dbReference>
<dbReference type="GO" id="GO:0070573">
    <property type="term" value="F:metallodipeptidase activity"/>
    <property type="evidence" value="ECO:0000314"/>
    <property type="project" value="UniProtKB"/>
</dbReference>
<dbReference type="GO" id="GO:0008235">
    <property type="term" value="F:metalloexopeptidase activity"/>
    <property type="evidence" value="ECO:0000304"/>
    <property type="project" value="UniProtKB"/>
</dbReference>
<dbReference type="GO" id="GO:0072341">
    <property type="term" value="F:modified amino acid binding"/>
    <property type="evidence" value="ECO:0000314"/>
    <property type="project" value="UniProtKB"/>
</dbReference>
<dbReference type="GO" id="GO:0008270">
    <property type="term" value="F:zinc ion binding"/>
    <property type="evidence" value="ECO:0000314"/>
    <property type="project" value="UniProtKB"/>
</dbReference>
<dbReference type="GO" id="GO:0016999">
    <property type="term" value="P:antibiotic metabolic process"/>
    <property type="evidence" value="ECO:0000314"/>
    <property type="project" value="UniProtKB"/>
</dbReference>
<dbReference type="GO" id="GO:0071277">
    <property type="term" value="P:cellular response to calcium ion"/>
    <property type="evidence" value="ECO:0000250"/>
    <property type="project" value="UniProtKB"/>
</dbReference>
<dbReference type="GO" id="GO:0071732">
    <property type="term" value="P:cellular response to nitric oxide"/>
    <property type="evidence" value="ECO:0000250"/>
    <property type="project" value="UniProtKB"/>
</dbReference>
<dbReference type="GO" id="GO:0006751">
    <property type="term" value="P:glutathione catabolic process"/>
    <property type="evidence" value="ECO:0000250"/>
    <property type="project" value="UniProtKB"/>
</dbReference>
<dbReference type="GO" id="GO:0006749">
    <property type="term" value="P:glutathione metabolic process"/>
    <property type="evidence" value="ECO:0000304"/>
    <property type="project" value="UniProtKB"/>
</dbReference>
<dbReference type="GO" id="GO:0050667">
    <property type="term" value="P:homocysteine metabolic process"/>
    <property type="evidence" value="ECO:0000314"/>
    <property type="project" value="UniProtKB"/>
</dbReference>
<dbReference type="GO" id="GO:0006954">
    <property type="term" value="P:inflammatory response"/>
    <property type="evidence" value="ECO:0007669"/>
    <property type="project" value="Ensembl"/>
</dbReference>
<dbReference type="GO" id="GO:0072340">
    <property type="term" value="P:lactam catabolic process"/>
    <property type="evidence" value="ECO:0000304"/>
    <property type="project" value="UniProtKB"/>
</dbReference>
<dbReference type="GO" id="GO:1901749">
    <property type="term" value="P:leukotriene D4 catabolic process"/>
    <property type="evidence" value="ECO:0000314"/>
    <property type="project" value="UniProtKB"/>
</dbReference>
<dbReference type="GO" id="GO:0030336">
    <property type="term" value="P:negative regulation of cell migration"/>
    <property type="evidence" value="ECO:0000315"/>
    <property type="project" value="UniProtKB"/>
</dbReference>
<dbReference type="GO" id="GO:0030593">
    <property type="term" value="P:neutrophil chemotaxis"/>
    <property type="evidence" value="ECO:0007669"/>
    <property type="project" value="Ensembl"/>
</dbReference>
<dbReference type="GO" id="GO:0006508">
    <property type="term" value="P:proteolysis"/>
    <property type="evidence" value="ECO:0007669"/>
    <property type="project" value="UniProtKB-KW"/>
</dbReference>
<dbReference type="CDD" id="cd01301">
    <property type="entry name" value="rDP_like"/>
    <property type="match status" value="1"/>
</dbReference>
<dbReference type="FunFam" id="3.20.20.140:FF:000030">
    <property type="entry name" value="Dipeptidase"/>
    <property type="match status" value="1"/>
</dbReference>
<dbReference type="Gene3D" id="3.20.20.140">
    <property type="entry name" value="Metal-dependent hydrolases"/>
    <property type="match status" value="1"/>
</dbReference>
<dbReference type="InterPro" id="IPR000180">
    <property type="entry name" value="Dipep_AS"/>
</dbReference>
<dbReference type="InterPro" id="IPR032466">
    <property type="entry name" value="Metal_Hydrolase"/>
</dbReference>
<dbReference type="InterPro" id="IPR008257">
    <property type="entry name" value="Pept_M19"/>
</dbReference>
<dbReference type="PANTHER" id="PTHR10443:SF38">
    <property type="entry name" value="DIPEPTIDASE 1"/>
    <property type="match status" value="1"/>
</dbReference>
<dbReference type="PANTHER" id="PTHR10443">
    <property type="entry name" value="MICROSOMAL DIPEPTIDASE"/>
    <property type="match status" value="1"/>
</dbReference>
<dbReference type="Pfam" id="PF01244">
    <property type="entry name" value="Peptidase_M19"/>
    <property type="match status" value="1"/>
</dbReference>
<dbReference type="SUPFAM" id="SSF51556">
    <property type="entry name" value="Metallo-dependent hydrolases"/>
    <property type="match status" value="1"/>
</dbReference>
<dbReference type="PROSITE" id="PS00869">
    <property type="entry name" value="RENAL_DIPEPTIDASE_1"/>
    <property type="match status" value="1"/>
</dbReference>
<dbReference type="PROSITE" id="PS51365">
    <property type="entry name" value="RENAL_DIPEPTIDASE_2"/>
    <property type="match status" value="1"/>
</dbReference>
<proteinExistence type="evidence at protein level"/>
<reference key="1">
    <citation type="journal article" date="1993" name="Biochim. Biophys. Acta">
        <title>Cloning and structural analysis of genomic DNA for human renal dipeptidase.</title>
        <authorList>
            <person name="Satoh S."/>
            <person name="Kusunoki C."/>
            <person name="Konta Y."/>
            <person name="Niwa M."/>
            <person name="Kohsaka M."/>
        </authorList>
    </citation>
    <scope>NUCLEOTIDE SEQUENCE [GENOMIC DNA]</scope>
    <source>
        <tissue>Liver</tissue>
    </source>
</reference>
<reference key="2">
    <citation type="journal article" date="1990" name="J. Biol. Chem.">
        <title>Primary structure of human microsomal dipeptidase deduced from molecular cloning.</title>
        <authorList>
            <person name="Adachi H."/>
            <person name="Tawaragi Y."/>
            <person name="Inuzuka C."/>
            <person name="Kubota I."/>
            <person name="Tsujimoto M."/>
            <person name="Nishihara T."/>
            <person name="Nakazato H."/>
        </authorList>
    </citation>
    <scope>NUCLEOTIDE SEQUENCE [MRNA]</scope>
    <scope>CATALYTIC ACTIVITY</scope>
    <scope>TISSUE SPECIFICITY</scope>
</reference>
<reference key="3">
    <citation type="journal article" date="1994" name="Biotechnol. Prog.">
        <title>Gene structural analysis and expression of human renal dipeptidase.</title>
        <authorList>
            <person name="Satoh S."/>
            <person name="Ohtsuka K."/>
            <person name="Keida Y."/>
            <person name="Kusunoki C."/>
            <person name="Konta Y."/>
            <person name="Niwa M."/>
            <person name="Kohsaka M."/>
        </authorList>
    </citation>
    <scope>NUCLEOTIDE SEQUENCE [MRNA]</scope>
    <source>
        <tissue>Kidney</tissue>
    </source>
</reference>
<reference key="4">
    <citation type="submission" date="2003-05" db="EMBL/GenBank/DDBJ databases">
        <title>Cloning of human full-length CDSs in BD Creator(TM) system donor vector.</title>
        <authorList>
            <person name="Kalnine N."/>
            <person name="Chen X."/>
            <person name="Rolfs A."/>
            <person name="Halleck A."/>
            <person name="Hines L."/>
            <person name="Eisenstein S."/>
            <person name="Koundinya M."/>
            <person name="Raphael J."/>
            <person name="Moreira D."/>
            <person name="Kelley T."/>
            <person name="LaBaer J."/>
            <person name="Lin Y."/>
            <person name="Phelan M."/>
            <person name="Farmer A."/>
        </authorList>
    </citation>
    <scope>NUCLEOTIDE SEQUENCE [LARGE SCALE MRNA]</scope>
</reference>
<reference key="5">
    <citation type="submission" date="2005-09" db="EMBL/GenBank/DDBJ databases">
        <authorList>
            <person name="Mural R.J."/>
            <person name="Istrail S."/>
            <person name="Sutton G.G."/>
            <person name="Florea L."/>
            <person name="Halpern A.L."/>
            <person name="Mobarry C.M."/>
            <person name="Lippert R."/>
            <person name="Walenz B."/>
            <person name="Shatkay H."/>
            <person name="Dew I."/>
            <person name="Miller J.R."/>
            <person name="Flanigan M.J."/>
            <person name="Edwards N.J."/>
            <person name="Bolanos R."/>
            <person name="Fasulo D."/>
            <person name="Halldorsson B.V."/>
            <person name="Hannenhalli S."/>
            <person name="Turner R."/>
            <person name="Yooseph S."/>
            <person name="Lu F."/>
            <person name="Nusskern D.R."/>
            <person name="Shue B.C."/>
            <person name="Zheng X.H."/>
            <person name="Zhong F."/>
            <person name="Delcher A.L."/>
            <person name="Huson D.H."/>
            <person name="Kravitz S.A."/>
            <person name="Mouchard L."/>
            <person name="Reinert K."/>
            <person name="Remington K.A."/>
            <person name="Clark A.G."/>
            <person name="Waterman M.S."/>
            <person name="Eichler E.E."/>
            <person name="Adams M.D."/>
            <person name="Hunkapiller M.W."/>
            <person name="Myers E.W."/>
            <person name="Venter J.C."/>
        </authorList>
    </citation>
    <scope>NUCLEOTIDE SEQUENCE [LARGE SCALE GENOMIC DNA]</scope>
</reference>
<reference key="6">
    <citation type="journal article" date="2004" name="Genome Res.">
        <title>The status, quality, and expansion of the NIH full-length cDNA project: the Mammalian Gene Collection (MGC).</title>
        <authorList>
            <consortium name="The MGC Project Team"/>
        </authorList>
    </citation>
    <scope>NUCLEOTIDE SEQUENCE [LARGE SCALE MRNA]</scope>
    <source>
        <tissue>Colon</tissue>
    </source>
</reference>
<reference key="7">
    <citation type="journal article" date="1990" name="Biochem. J.">
        <title>Characterization of the glycosyl-phosphatidylinositol-anchored human renal dipeptidase reveals that it is more extensively glycosylated than the pig enzyme.</title>
        <authorList>
            <person name="Hooper N.M."/>
            <person name="Keen J.N."/>
            <person name="Turner A.J."/>
        </authorList>
    </citation>
    <scope>PROTEIN SEQUENCE OF 17-56; 111-121 AND 298-310</scope>
</reference>
<reference key="8">
    <citation type="journal article" date="1989" name="J. Biochem.">
        <title>Purification and characterization of human microsomal dipeptidase.</title>
        <authorList>
            <person name="Adachi H."/>
            <person name="Kubota I."/>
            <person name="Okamura N."/>
            <person name="Iwata H."/>
            <person name="Tsujimoto M."/>
            <person name="Nakazato H."/>
            <person name="Nishihara T."/>
            <person name="Noguchi T."/>
        </authorList>
    </citation>
    <scope>PROTEIN SEQUENCE OF 17-39</scope>
</reference>
<reference key="9">
    <citation type="journal article" date="2004" name="Protein Sci.">
        <title>Signal peptide prediction based on analysis of experimentally verified cleavage sites.</title>
        <authorList>
            <person name="Zhang Z."/>
            <person name="Henzel W.J."/>
        </authorList>
    </citation>
    <scope>PROTEIN SEQUENCE OF 17-31</scope>
</reference>
<reference key="10">
    <citation type="journal article" date="1984" name="J. Biol. Chem.">
        <title>Beta-lactamase activity of purified and partially characterized human renal dipeptidase.</title>
        <authorList>
            <person name="Campbell B.J."/>
            <person name="Forrester L.J."/>
            <person name="Zahler W.L."/>
            <person name="Burks M."/>
        </authorList>
    </citation>
    <scope>CATALYTIC ACTIVITY</scope>
    <scope>BIOPHYSICOCHEMICAL PROPERTIES</scope>
</reference>
<reference key="11">
    <citation type="journal article" date="1990" name="J. Biol. Chem.">
        <title>Identification of membrane anchoring site of human renal dipeptidase and construction and expression of a cDNA for its secretory form.</title>
        <authorList>
            <person name="Adachi H."/>
            <person name="Katayama T."/>
            <person name="Inuzuka C."/>
            <person name="Oikawa S."/>
            <person name="Tsujimoto M."/>
            <person name="Nakazato H."/>
        </authorList>
    </citation>
    <scope>GPI-ANCHOR AT SER-385</scope>
    <scope>PROTEIN SEQUENCE OF 379-385</scope>
    <scope>SUBCELLULAR LOCATION</scope>
</reference>
<reference key="12">
    <citation type="journal article" date="1993" name="Biochim. Biophys. Acta">
        <title>Importance of Glu-125 in the catalytic activity of human renal dipeptidase.</title>
        <authorList>
            <person name="Adachi H."/>
            <person name="Katayama T."/>
            <person name="Nakazato H."/>
            <person name="Tsujimoto M."/>
        </authorList>
    </citation>
    <scope>MUTAGENESIS OF GLU-141</scope>
    <scope>CATALYTIC ACTIVITY</scope>
    <scope>ACTIVITY REGULATION</scope>
</reference>
<reference key="13">
    <citation type="journal article" date="2009" name="J. Proteome Res.">
        <title>Glycoproteomics analysis of human liver tissue by combination of multiple enzyme digestion and hydrazide chemistry.</title>
        <authorList>
            <person name="Chen R."/>
            <person name="Jiang X."/>
            <person name="Sun D."/>
            <person name="Han G."/>
            <person name="Wang F."/>
            <person name="Ye M."/>
            <person name="Wang L."/>
            <person name="Zou H."/>
        </authorList>
    </citation>
    <scope>GLYCOSYLATION [LARGE SCALE ANALYSIS] AT ASN-57 AND ASN-279</scope>
    <source>
        <tissue>Liver</tissue>
    </source>
</reference>
<reference key="14">
    <citation type="journal article" date="2002" name="J. Mol. Biol.">
        <title>Crystal structure of human renal dipeptidase involved in beta-lactam hydrolysis.</title>
        <authorList>
            <person name="Nitanai Y."/>
            <person name="Satow Y."/>
            <person name="Adachi H."/>
            <person name="Tsujimoto M."/>
        </authorList>
    </citation>
    <scope>X-RAY CRYSTALLOGRAPHY (2.00 ANGSTROMS) OF 17-385 IN COMPLEX WITH ZINC AND CILASTATIN</scope>
    <scope>SUBUNIT</scope>
    <scope>COFACTOR</scope>
    <scope>DISULFIDE BONDS</scope>
    <scope>GLYCOSYLATION AT ASN-57 AND ASN-332</scope>
</reference>
<reference key="15">
    <citation type="journal article" date="2006" name="Science">
        <title>The consensus coding sequences of human breast and colorectal cancers.</title>
        <authorList>
            <person name="Sjoeblom T."/>
            <person name="Jones S."/>
            <person name="Wood L.D."/>
            <person name="Parsons D.W."/>
            <person name="Lin J."/>
            <person name="Barber T.D."/>
            <person name="Mandelker D."/>
            <person name="Leary R.J."/>
            <person name="Ptak J."/>
            <person name="Silliman N."/>
            <person name="Szabo S."/>
            <person name="Buckhaults P."/>
            <person name="Farrell C."/>
            <person name="Meeh P."/>
            <person name="Markowitz S.D."/>
            <person name="Willis J."/>
            <person name="Dawson D."/>
            <person name="Willson J.K.V."/>
            <person name="Gazdar A.F."/>
            <person name="Hartigan J."/>
            <person name="Wu L."/>
            <person name="Liu C."/>
            <person name="Parmigiani G."/>
            <person name="Park B.H."/>
            <person name="Bachman K.E."/>
            <person name="Papadopoulos N."/>
            <person name="Vogelstein B."/>
            <person name="Kinzler K.W."/>
            <person name="Velculescu V.E."/>
        </authorList>
    </citation>
    <scope>VARIANT [LARGE SCALE ANALYSIS] HIS-246</scope>
</reference>
<reference key="16">
    <citation type="journal article" date="2017" name="Biomed. Rep.">
        <title>Clinicopathological examination of dipeptidase 1 expression in colorectal cancer.</title>
        <authorList>
            <person name="Tachibana K."/>
            <person name="Saito M."/>
            <person name="Imai J.I."/>
            <person name="Ito E."/>
            <person name="Yanagisawa Y."/>
            <person name="Honma R."/>
            <person name="Saito K."/>
            <person name="Ando J."/>
            <person name="Momma T."/>
            <person name="Ohki S."/>
            <person name="Ohtake T."/>
            <person name="Watanabe S."/>
            <person name="Waguri S."/>
            <person name="Takenoshita S."/>
        </authorList>
    </citation>
    <scope>INDUCTION</scope>
    <scope>SUBCELLULAR LOCATION</scope>
</reference>
<reference key="17">
    <citation type="journal article" date="2019" name="Cell">
        <title>Dipeptidase-1 is an adhesion receptor for neutrophil recruitment in lungs and liver.</title>
        <authorList>
            <person name="Choudhury S.R."/>
            <person name="Babes L."/>
            <person name="Rahn J.J."/>
            <person name="Ahn B.Y."/>
            <person name="Goring K.R."/>
            <person name="King J.C."/>
            <person name="Lau A."/>
            <person name="Petri B."/>
            <person name="Hao X."/>
            <person name="Chojnacki A.K."/>
            <person name="Thanabalasuriar A."/>
            <person name="McAvoy E.F."/>
            <person name="Tabaries S."/>
            <person name="Schraeder C."/>
            <person name="Patel K.D."/>
            <person name="Siegel P.M."/>
            <person name="Kopciuk K.A."/>
            <person name="Schriemer D.C."/>
            <person name="Muruve D.A."/>
            <person name="Kelly M.M."/>
            <person name="Yipp B.G."/>
            <person name="Kubes P."/>
            <person name="Robbins S.M."/>
            <person name="Senger D.L."/>
        </authorList>
    </citation>
    <scope>FUNCTION</scope>
    <scope>CATALYTIC ACTIVITY</scope>
    <scope>MUTAGENESIS OF GLU-141</scope>
    <scope>TISSUE SPECIFICITY</scope>
    <scope>ACTIVITY REGULATION</scope>
</reference>
<reference key="18">
    <citation type="journal article" date="2020" name="J. Struct. Biol.">
        <title>Structure of human DPEP3 in complex with the SC-003 antibody Fab fragment reveals basis for lack of dipeptidase activity.</title>
        <authorList>
            <person name="Hayashi K."/>
            <person name="Longenecker K.L."/>
            <person name="Koenig P."/>
            <person name="Prashar A."/>
            <person name="Hampl J."/>
            <person name="Stoll V."/>
            <person name="Vivona S."/>
        </authorList>
    </citation>
    <scope>FUNCTION</scope>
    <scope>TRANSPORTER ACTIVITY</scope>
    <scope>MUTAGENESIS OF GLU-141 AND ASP-304</scope>
    <scope>ZINC-BINDING</scope>
</reference>
<feature type="signal peptide" evidence="6 9 12">
    <location>
        <begin position="1"/>
        <end position="16"/>
    </location>
</feature>
<feature type="chain" id="PRO_0000018652" description="Dipeptidase 1">
    <location>
        <begin position="17"/>
        <end position="385"/>
    </location>
</feature>
<feature type="propeptide" id="PRO_0000018653" description="Removed in mature form" evidence="10">
    <location>
        <begin position="386"/>
        <end position="411"/>
    </location>
</feature>
<feature type="binding site" evidence="4 5">
    <location>
        <position position="36"/>
    </location>
    <ligand>
        <name>Zn(2+)</name>
        <dbReference type="ChEBI" id="CHEBI:29105"/>
        <label>1</label>
        <note>catalytic</note>
    </ligand>
</feature>
<feature type="binding site" evidence="4 5">
    <location>
        <position position="38"/>
    </location>
    <ligand>
        <name>Zn(2+)</name>
        <dbReference type="ChEBI" id="CHEBI:29105"/>
        <label>1</label>
        <note>catalytic</note>
    </ligand>
</feature>
<feature type="binding site" evidence="4 5 15">
    <location>
        <position position="141"/>
    </location>
    <ligand>
        <name>Zn(2+)</name>
        <dbReference type="ChEBI" id="CHEBI:29105"/>
        <label>1</label>
        <note>catalytic</note>
    </ligand>
</feature>
<feature type="binding site" evidence="4 5 15">
    <location>
        <position position="141"/>
    </location>
    <ligand>
        <name>Zn(2+)</name>
        <dbReference type="ChEBI" id="CHEBI:29105"/>
        <label>2</label>
        <note>catalytic</note>
    </ligand>
</feature>
<feature type="binding site" evidence="5">
    <location>
        <position position="168"/>
    </location>
    <ligand>
        <name>substrate</name>
    </ligand>
</feature>
<feature type="binding site" evidence="4 5">
    <location>
        <position position="214"/>
    </location>
    <ligand>
        <name>Zn(2+)</name>
        <dbReference type="ChEBI" id="CHEBI:29105"/>
        <label>2</label>
        <note>catalytic</note>
    </ligand>
</feature>
<feature type="binding site" evidence="4 5">
    <location>
        <position position="235"/>
    </location>
    <ligand>
        <name>Zn(2+)</name>
        <dbReference type="ChEBI" id="CHEBI:29105"/>
        <label>2</label>
        <note>catalytic</note>
    </ligand>
</feature>
<feature type="binding site" evidence="5">
    <location>
        <position position="246"/>
    </location>
    <ligand>
        <name>substrate</name>
    </ligand>
</feature>
<feature type="binding site" evidence="5">
    <location>
        <position position="304"/>
    </location>
    <ligand>
        <name>substrate</name>
    </ligand>
</feature>
<feature type="lipid moiety-binding region" description="GPI-anchor amidated serine" evidence="10">
    <location>
        <position position="385"/>
    </location>
</feature>
<feature type="glycosylation site" description="N-linked (GlcNAc...) asparagine" evidence="5 8">
    <location>
        <position position="57"/>
    </location>
</feature>
<feature type="glycosylation site" description="N-linked (GlcNAc...) asparagine" evidence="8">
    <location>
        <position position="279"/>
    </location>
</feature>
<feature type="glycosylation site" description="N-linked (GlcNAc...) asparagine" evidence="5">
    <location>
        <position position="332"/>
    </location>
</feature>
<feature type="glycosylation site" description="N-linked (GlcNAc...) asparagine" evidence="3">
    <location>
        <position position="358"/>
    </location>
</feature>
<feature type="disulfide bond" evidence="4 5">
    <location>
        <begin position="87"/>
        <end position="170"/>
    </location>
</feature>
<feature type="disulfide bond" evidence="4 5">
    <location>
        <begin position="242"/>
        <end position="274"/>
    </location>
</feature>
<feature type="disulfide bond" description="Interchain" evidence="4 5">
    <location>
        <position position="377"/>
    </location>
</feature>
<feature type="sequence variant" id="VAR_036496" description="In a colorectal cancer sample; somatic mutation; dbSNP:rs1043397364." evidence="7">
    <original>R</original>
    <variation>H</variation>
    <location>
        <position position="246"/>
    </location>
</feature>
<feature type="sequence variant" id="VAR_061375" description="In dbSNP:rs1126464.">
    <original>E</original>
    <variation>K</variation>
    <location>
        <position position="351"/>
    </location>
</feature>
<feature type="sequence variant" id="VAR_061376" description="In dbSNP:rs1126464.">
    <original>E</original>
    <variation>Q</variation>
    <location>
        <position position="351"/>
    </location>
</feature>
<feature type="mutagenesis site" description="Loss of zinc binding." evidence="15">
    <original>E</original>
    <variation>A</variation>
    <location>
        <position position="141"/>
    </location>
</feature>
<feature type="mutagenesis site" description="Complete loss of activity." evidence="17">
    <original>E</original>
    <variation>C</variation>
    <location>
        <position position="141"/>
    </location>
</feature>
<feature type="mutagenesis site" description="Abolished dipeptidase activity. Does not affect ability to bind neutrophils." evidence="14 17">
    <original>E</original>
    <variation>D</variation>
    <location>
        <position position="141"/>
    </location>
</feature>
<feature type="mutagenesis site" description="Partial loss of activity." evidence="17">
    <original>E</original>
    <variation>Q</variation>
    <location>
        <position position="141"/>
    </location>
</feature>
<feature type="mutagenesis site" description="Loss of ability to hydrolyze cystinyl-bis-glycine." evidence="15">
    <original>D</original>
    <variation>L</variation>
    <location>
        <position position="304"/>
    </location>
</feature>
<feature type="sequence conflict" description="In Ref. 1 and 3." evidence="21" ref="1 3">
    <original>P</original>
    <variation>S</variation>
    <location>
        <position position="9"/>
    </location>
</feature>
<feature type="sequence conflict" description="In Ref. 2." evidence="21" ref="2">
    <original>M</original>
    <variation>R</variation>
    <location>
        <position position="102"/>
    </location>
</feature>
<feature type="sequence conflict" description="In Ref. 2." evidence="21" ref="2">
    <original>I</original>
    <variation>R</variation>
    <location>
        <position position="125"/>
    </location>
</feature>
<feature type="helix" evidence="23">
    <location>
        <begin position="18"/>
        <end position="27"/>
    </location>
</feature>
<feature type="strand" evidence="23">
    <location>
        <begin position="32"/>
        <end position="37"/>
    </location>
</feature>
<feature type="helix" evidence="23">
    <location>
        <begin position="39"/>
        <end position="47"/>
    </location>
</feature>
<feature type="helix" evidence="23">
    <location>
        <begin position="54"/>
        <end position="56"/>
    </location>
</feature>
<feature type="turn" evidence="23">
    <location>
        <begin position="58"/>
        <end position="60"/>
    </location>
</feature>
<feature type="strand" evidence="23">
    <location>
        <begin position="63"/>
        <end position="65"/>
    </location>
</feature>
<feature type="helix" evidence="23">
    <location>
        <begin position="68"/>
        <end position="73"/>
    </location>
</feature>
<feature type="strand" evidence="23">
    <location>
        <begin position="76"/>
        <end position="83"/>
    </location>
</feature>
<feature type="helix" evidence="23">
    <location>
        <begin position="87"/>
        <end position="89"/>
    </location>
</feature>
<feature type="turn" evidence="23">
    <location>
        <begin position="90"/>
        <end position="93"/>
    </location>
</feature>
<feature type="helix" evidence="23">
    <location>
        <begin position="94"/>
        <end position="111"/>
    </location>
</feature>
<feature type="turn" evidence="23">
    <location>
        <begin position="113"/>
        <end position="115"/>
    </location>
</feature>
<feature type="strand" evidence="23">
    <location>
        <begin position="116"/>
        <end position="118"/>
    </location>
</feature>
<feature type="helix" evidence="23">
    <location>
        <begin position="122"/>
        <end position="131"/>
    </location>
</feature>
<feature type="strand" evidence="23">
    <location>
        <begin position="134"/>
        <end position="141"/>
    </location>
</feature>
<feature type="helix" evidence="23">
    <location>
        <begin position="143"/>
        <end position="146"/>
    </location>
</feature>
<feature type="helix" evidence="23">
    <location>
        <begin position="150"/>
        <end position="158"/>
    </location>
</feature>
<feature type="strand" evidence="23">
    <location>
        <begin position="161"/>
        <end position="166"/>
    </location>
</feature>
<feature type="strand" evidence="23">
    <location>
        <begin position="168"/>
        <end position="170"/>
    </location>
</feature>
<feature type="strand" evidence="23">
    <location>
        <begin position="173"/>
        <end position="175"/>
    </location>
</feature>
<feature type="helix" evidence="23">
    <location>
        <begin position="178"/>
        <end position="180"/>
    </location>
</feature>
<feature type="turn" evidence="23">
    <location>
        <begin position="181"/>
        <end position="183"/>
    </location>
</feature>
<feature type="strand" evidence="23">
    <location>
        <begin position="188"/>
        <end position="192"/>
    </location>
</feature>
<feature type="helix" evidence="23">
    <location>
        <begin position="194"/>
        <end position="206"/>
    </location>
</feature>
<feature type="strand" evidence="23">
    <location>
        <begin position="209"/>
        <end position="211"/>
    </location>
</feature>
<feature type="helix" evidence="23">
    <location>
        <begin position="217"/>
        <end position="226"/>
    </location>
</feature>
<feature type="strand" evidence="23">
    <location>
        <begin position="232"/>
        <end position="235"/>
    </location>
</feature>
<feature type="turn" evidence="23">
    <location>
        <begin position="239"/>
        <end position="241"/>
    </location>
</feature>
<feature type="helix" evidence="23">
    <location>
        <begin position="250"/>
        <end position="259"/>
    </location>
</feature>
<feature type="strand" evidence="23">
    <location>
        <begin position="262"/>
        <end position="265"/>
    </location>
</feature>
<feature type="helix" evidence="23">
    <location>
        <begin position="269"/>
        <end position="272"/>
    </location>
</feature>
<feature type="strand" evidence="23">
    <location>
        <begin position="274"/>
        <end position="276"/>
    </location>
</feature>
<feature type="helix" evidence="23">
    <location>
        <begin position="280"/>
        <end position="294"/>
    </location>
</feature>
<feature type="helix" evidence="23">
    <location>
        <begin position="296"/>
        <end position="298"/>
    </location>
</feature>
<feature type="strand" evidence="23">
    <location>
        <begin position="299"/>
        <end position="301"/>
    </location>
</feature>
<feature type="turn" evidence="22">
    <location>
        <begin position="305"/>
        <end position="307"/>
    </location>
</feature>
<feature type="helix" evidence="23">
    <location>
        <begin position="321"/>
        <end position="330"/>
    </location>
</feature>
<feature type="helix" evidence="23">
    <location>
        <begin position="335"/>
        <end position="342"/>
    </location>
</feature>
<feature type="helix" evidence="23">
    <location>
        <begin position="344"/>
        <end position="356"/>
    </location>
</feature>
<feature type="strand" evidence="23">
    <location>
        <begin position="359"/>
        <end position="361"/>
    </location>
</feature>
<feature type="helix" evidence="23">
    <location>
        <begin position="370"/>
        <end position="372"/>
    </location>
</feature>
<feature type="strand" evidence="23">
    <location>
        <begin position="375"/>
        <end position="377"/>
    </location>
</feature>
<feature type="turn" evidence="23">
    <location>
        <begin position="381"/>
        <end position="383"/>
    </location>
</feature>
<sequence>MWSGWWLWPLVAVCTADFFRDEAERIMRDSPVIDGHNDLPWQLLDMFNNRLQDERANLTTLAGTHTNIPKLRAGFVGGQFWSVYTPCDTQNKDAVRRTLEQMDVVHRMCRMYPETFLYVTSSAGIRQAFREGKVASLIGVEGGHSIDSSLGVLRALYQLGMRYLTLTHSCNTPWADNWLVDTGDSEPQSQGLSPFGQRVVKELNRLGVLIDLAHVSVATMKATLQLSRAPVIFSHSSAYSVCASRRNVPDDVLRLVKQTDSLVMVNFYNNYISCTNKANLSQVADHLDHIKEVAGARAVGFGGDFDGVPRVPEGLEDVSKYPDLIAELLRRNWTEAEVKGALADNLLRVFEAVEQASNLTQAPEEEPIPLDQLGGSCRTHYGYSSGASSLHRHWGLLLASLAPLVLCLSLL</sequence>
<protein>
    <recommendedName>
        <fullName>Dipeptidase 1</fullName>
        <ecNumber evidence="11 15 16">3.4.13.19</ecNumber>
    </recommendedName>
    <alternativeName>
        <fullName evidence="21">Beta-lactamase</fullName>
        <ecNumber evidence="16">3.5.2.6</ecNumber>
    </alternativeName>
    <alternativeName>
        <fullName>Dehydropeptidase-I</fullName>
    </alternativeName>
    <alternativeName>
        <fullName evidence="19">Microsomal dipeptidase</fullName>
    </alternativeName>
    <alternativeName>
        <fullName evidence="20">Renal dipeptidase</fullName>
        <shortName evidence="20">hRDP</shortName>
    </alternativeName>
</protein>
<accession>P16444</accession>
<accession>D3DX80</accession>
<accession>Q96AK2</accession>
<organism>
    <name type="scientific">Homo sapiens</name>
    <name type="common">Human</name>
    <dbReference type="NCBI Taxonomy" id="9606"/>
    <lineage>
        <taxon>Eukaryota</taxon>
        <taxon>Metazoa</taxon>
        <taxon>Chordata</taxon>
        <taxon>Craniata</taxon>
        <taxon>Vertebrata</taxon>
        <taxon>Euteleostomi</taxon>
        <taxon>Mammalia</taxon>
        <taxon>Eutheria</taxon>
        <taxon>Euarchontoglires</taxon>
        <taxon>Primates</taxon>
        <taxon>Haplorrhini</taxon>
        <taxon>Catarrhini</taxon>
        <taxon>Hominidae</taxon>
        <taxon>Homo</taxon>
    </lineage>
</organism>